<dbReference type="EC" id="3.2.1.41" evidence="7 8"/>
<dbReference type="EMBL" id="AE005672">
    <property type="protein sequence ID" value="AAK74446.1"/>
    <property type="molecule type" value="Genomic_DNA"/>
</dbReference>
<dbReference type="RefSeq" id="WP_001232766.1">
    <property type="nucleotide sequence ID" value="NZ_CP155539.1"/>
</dbReference>
<dbReference type="PDB" id="2J44">
    <property type="method" value="X-ray"/>
    <property type="resolution" value="2.10 A"/>
    <property type="chains" value="A=135-353"/>
</dbReference>
<dbReference type="PDB" id="2YA0">
    <property type="method" value="X-ray"/>
    <property type="resolution" value="1.85 A"/>
    <property type="chains" value="A=437-1150"/>
</dbReference>
<dbReference type="PDB" id="2YA1">
    <property type="method" value="X-ray"/>
    <property type="resolution" value="2.25 A"/>
    <property type="chains" value="A=135-1143"/>
</dbReference>
<dbReference type="PDB" id="2YA2">
    <property type="method" value="X-ray"/>
    <property type="resolution" value="2.37 A"/>
    <property type="chains" value="A=436-1143"/>
</dbReference>
<dbReference type="PDBsum" id="2J44"/>
<dbReference type="PDBsum" id="2YA0"/>
<dbReference type="PDBsum" id="2YA1"/>
<dbReference type="PDBsum" id="2YA2"/>
<dbReference type="SMR" id="A0A0H2UNG0"/>
<dbReference type="PaxDb" id="170187-SP_0268"/>
<dbReference type="EnsemblBacteria" id="AAK74446">
    <property type="protein sequence ID" value="AAK74446"/>
    <property type="gene ID" value="SP_0268"/>
</dbReference>
<dbReference type="KEGG" id="spn:SP_0268"/>
<dbReference type="eggNOG" id="COG0508">
    <property type="taxonomic scope" value="Bacteria"/>
</dbReference>
<dbReference type="eggNOG" id="COG1523">
    <property type="taxonomic scope" value="Bacteria"/>
</dbReference>
<dbReference type="PhylomeDB" id="A0A0H2UNG0"/>
<dbReference type="BioCyc" id="SPNE170187:G1FZB-275-MONOMER"/>
<dbReference type="EvolutionaryTrace" id="A0A0H2UNG0"/>
<dbReference type="Proteomes" id="UP000000585">
    <property type="component" value="Chromosome"/>
</dbReference>
<dbReference type="GO" id="GO:0009986">
    <property type="term" value="C:cell surface"/>
    <property type="evidence" value="ECO:0000250"/>
    <property type="project" value="UniProtKB"/>
</dbReference>
<dbReference type="GO" id="GO:0005576">
    <property type="term" value="C:extracellular region"/>
    <property type="evidence" value="ECO:0007669"/>
    <property type="project" value="UniProtKB-KW"/>
</dbReference>
<dbReference type="GO" id="GO:2001066">
    <property type="term" value="F:amylopectin binding"/>
    <property type="evidence" value="ECO:0000314"/>
    <property type="project" value="UniProtKB"/>
</dbReference>
<dbReference type="GO" id="GO:0005509">
    <property type="term" value="F:calcium ion binding"/>
    <property type="evidence" value="ECO:0000314"/>
    <property type="project" value="UniProtKB"/>
</dbReference>
<dbReference type="GO" id="GO:2001069">
    <property type="term" value="F:glycogen binding"/>
    <property type="evidence" value="ECO:0000314"/>
    <property type="project" value="UniProtKB"/>
</dbReference>
<dbReference type="GO" id="GO:0010303">
    <property type="term" value="F:limit dextrinase activity"/>
    <property type="evidence" value="ECO:0000314"/>
    <property type="project" value="UniProtKB"/>
</dbReference>
<dbReference type="GO" id="GO:0030247">
    <property type="term" value="F:polysaccharide binding"/>
    <property type="evidence" value="ECO:0000314"/>
    <property type="project" value="UniProtKB"/>
</dbReference>
<dbReference type="GO" id="GO:2001067">
    <property type="term" value="F:pullulan binding"/>
    <property type="evidence" value="ECO:0000314"/>
    <property type="project" value="UniProtKB"/>
</dbReference>
<dbReference type="GO" id="GO:0051060">
    <property type="term" value="F:pullulanase activity"/>
    <property type="evidence" value="ECO:0000314"/>
    <property type="project" value="UniProtKB"/>
</dbReference>
<dbReference type="GO" id="GO:0030979">
    <property type="term" value="P:alpha-glucan biosynthetic process"/>
    <property type="evidence" value="ECO:0000314"/>
    <property type="project" value="UniProtKB"/>
</dbReference>
<dbReference type="CDD" id="cd11341">
    <property type="entry name" value="AmyAc_Pullulanase_LD-like"/>
    <property type="match status" value="1"/>
</dbReference>
<dbReference type="CDD" id="cd10315">
    <property type="entry name" value="CBM41_pullulanase"/>
    <property type="match status" value="2"/>
</dbReference>
<dbReference type="CDD" id="cd02860">
    <property type="entry name" value="E_set_Pullulanase"/>
    <property type="match status" value="1"/>
</dbReference>
<dbReference type="Gene3D" id="2.60.40.1110">
    <property type="match status" value="2"/>
</dbReference>
<dbReference type="Gene3D" id="2.60.40.1220">
    <property type="match status" value="1"/>
</dbReference>
<dbReference type="Gene3D" id="3.20.20.80">
    <property type="entry name" value="Glycosidases"/>
    <property type="match status" value="1"/>
</dbReference>
<dbReference type="Gene3D" id="2.60.40.1180">
    <property type="entry name" value="Golgi alpha-mannosidase II"/>
    <property type="match status" value="1"/>
</dbReference>
<dbReference type="Gene3D" id="2.60.40.10">
    <property type="entry name" value="Immunoglobulins"/>
    <property type="match status" value="1"/>
</dbReference>
<dbReference type="InterPro" id="IPR013784">
    <property type="entry name" value="Carb-bd-like_fold"/>
</dbReference>
<dbReference type="InterPro" id="IPR005323">
    <property type="entry name" value="CBM41_pullulanase"/>
</dbReference>
<dbReference type="InterPro" id="IPR014755">
    <property type="entry name" value="Cu-Rt/internalin_Ig-like"/>
</dbReference>
<dbReference type="InterPro" id="IPR006047">
    <property type="entry name" value="Glyco_hydro_13_cat_dom"/>
</dbReference>
<dbReference type="InterPro" id="IPR004193">
    <property type="entry name" value="Glyco_hydro_13_N"/>
</dbReference>
<dbReference type="InterPro" id="IPR013780">
    <property type="entry name" value="Glyco_hydro_b"/>
</dbReference>
<dbReference type="InterPro" id="IPR017853">
    <property type="entry name" value="Glycoside_hydrolase_SF"/>
</dbReference>
<dbReference type="InterPro" id="IPR013783">
    <property type="entry name" value="Ig-like_fold"/>
</dbReference>
<dbReference type="InterPro" id="IPR014756">
    <property type="entry name" value="Ig_E-set"/>
</dbReference>
<dbReference type="InterPro" id="IPR019931">
    <property type="entry name" value="LPXTG_anchor"/>
</dbReference>
<dbReference type="InterPro" id="IPR011838">
    <property type="entry name" value="Pullulan_Gpos"/>
</dbReference>
<dbReference type="InterPro" id="IPR040806">
    <property type="entry name" value="SpuA_C"/>
</dbReference>
<dbReference type="InterPro" id="IPR005877">
    <property type="entry name" value="YSIRK_signal_dom"/>
</dbReference>
<dbReference type="NCBIfam" id="TIGR01167">
    <property type="entry name" value="LPXTG_anchor"/>
    <property type="match status" value="1"/>
</dbReference>
<dbReference type="NCBIfam" id="TIGR02102">
    <property type="entry name" value="pullulan_Gpos"/>
    <property type="match status" value="1"/>
</dbReference>
<dbReference type="NCBIfam" id="TIGR01168">
    <property type="entry name" value="YSIRK_signal"/>
    <property type="match status" value="1"/>
</dbReference>
<dbReference type="PANTHER" id="PTHR43002">
    <property type="entry name" value="GLYCOGEN DEBRANCHING ENZYME"/>
    <property type="match status" value="1"/>
</dbReference>
<dbReference type="Pfam" id="PF00128">
    <property type="entry name" value="Alpha-amylase"/>
    <property type="match status" value="1"/>
</dbReference>
<dbReference type="Pfam" id="PF02922">
    <property type="entry name" value="CBM_48"/>
    <property type="match status" value="1"/>
</dbReference>
<dbReference type="Pfam" id="PF00746">
    <property type="entry name" value="Gram_pos_anchor"/>
    <property type="match status" value="1"/>
</dbReference>
<dbReference type="Pfam" id="PF03714">
    <property type="entry name" value="PUD"/>
    <property type="match status" value="2"/>
</dbReference>
<dbReference type="Pfam" id="PF18033">
    <property type="entry name" value="SpuA_C"/>
    <property type="match status" value="1"/>
</dbReference>
<dbReference type="Pfam" id="PF04650">
    <property type="entry name" value="YSIRK_signal"/>
    <property type="match status" value="1"/>
</dbReference>
<dbReference type="SMART" id="SM00642">
    <property type="entry name" value="Aamy"/>
    <property type="match status" value="1"/>
</dbReference>
<dbReference type="SUPFAM" id="SSF51445">
    <property type="entry name" value="(Trans)glycosidases"/>
    <property type="match status" value="1"/>
</dbReference>
<dbReference type="SUPFAM" id="SSF81296">
    <property type="entry name" value="E set domains"/>
    <property type="match status" value="1"/>
</dbReference>
<dbReference type="SUPFAM" id="SSF49452">
    <property type="entry name" value="Starch-binding domain-like"/>
    <property type="match status" value="2"/>
</dbReference>
<dbReference type="PROSITE" id="PS50847">
    <property type="entry name" value="GRAM_POS_ANCHORING"/>
    <property type="match status" value="1"/>
</dbReference>
<reference evidence="14 15" key="1">
    <citation type="journal article" date="2001" name="Science">
        <title>Complete genome sequence of a virulent isolate of Streptococcus pneumoniae.</title>
        <authorList>
            <person name="Tettelin H."/>
            <person name="Nelson K.E."/>
            <person name="Paulsen I.T."/>
            <person name="Eisen J.A."/>
            <person name="Read T.D."/>
            <person name="Peterson S.N."/>
            <person name="Heidelberg J.F."/>
            <person name="DeBoy R.T."/>
            <person name="Haft D.H."/>
            <person name="Dodson R.J."/>
            <person name="Durkin A.S."/>
            <person name="Gwinn M.L."/>
            <person name="Kolonay J.F."/>
            <person name="Nelson W.C."/>
            <person name="Peterson J.D."/>
            <person name="Umayam L.A."/>
            <person name="White O."/>
            <person name="Salzberg S.L."/>
            <person name="Lewis M.R."/>
            <person name="Radune D."/>
            <person name="Holtzapple E.K."/>
            <person name="Khouri H.M."/>
            <person name="Wolf A.M."/>
            <person name="Utterback T.R."/>
            <person name="Hansen C.L."/>
            <person name="McDonald L.A."/>
            <person name="Feldblyum T.V."/>
            <person name="Angiuoli S.V."/>
            <person name="Dickinson T."/>
            <person name="Hickey E.K."/>
            <person name="Holt I.E."/>
            <person name="Loftus B.J."/>
            <person name="Yang F."/>
            <person name="Smith H.O."/>
            <person name="Venter J.C."/>
            <person name="Dougherty B.A."/>
            <person name="Morrison D.A."/>
            <person name="Hollingshead S.K."/>
            <person name="Fraser C.M."/>
        </authorList>
    </citation>
    <scope>NUCLEOTIDE SEQUENCE [LARGE SCALE GENOMIC DNA]</scope>
    <source>
        <strain evidence="15">ATCC BAA-334 / TIGR4</strain>
    </source>
</reference>
<reference key="2">
    <citation type="journal article" date="2010" name="Mol. Microbiol.">
        <title>The molecular basis of glycogen breakdown and transport in Streptococcus pneumoniae.</title>
        <authorList>
            <person name="Abbott D.W."/>
            <person name="Higgins M.A."/>
            <person name="Hyrnuik S."/>
            <person name="Pluvinage B."/>
            <person name="Lammerts van Bueren A."/>
            <person name="Boraston A.B."/>
        </authorList>
    </citation>
    <scope>FUNCTION</scope>
    <scope>CATALYTIC ACTIVITY</scope>
    <scope>DISRUPTION PHENOTYPE</scope>
</reference>
<reference evidence="16" key="3">
    <citation type="journal article" date="2007" name="Nat. Struct. Mol. Biol.">
        <title>Identification and structural basis of binding to host lung glycogen by streptococcal virulence factors.</title>
        <authorList>
            <person name="van Bueren A.L."/>
            <person name="Higgins M."/>
            <person name="Wang D."/>
            <person name="Burke R.D."/>
            <person name="Boraston A.B."/>
        </authorList>
    </citation>
    <scope>X-RAY CRYSTALLOGRAPHY (2.10 ANGSTROMS) OF 135-353 IN COMPLEX WITH MALTOTETRAOSE</scope>
    <scope>FUNCTION</scope>
    <scope>SUBCELLULAR LOCATION</scope>
    <scope>DOMAIN</scope>
    <scope>BIOTECHNOLOGY</scope>
</reference>
<reference evidence="17 18 19" key="4">
    <citation type="journal article" date="2011" name="Structure">
        <title>The conformation and function of a multimodular glycogen-degrading pneumococcal virulence factor.</title>
        <authorList>
            <person name="Lammerts van Bueren A."/>
            <person name="Ficko-Blean E."/>
            <person name="Pluvinage B."/>
            <person name="Hehemann J.H."/>
            <person name="Higgins M.A."/>
            <person name="Deng L."/>
            <person name="Ogunniyi A.D."/>
            <person name="Stroeher U.H."/>
            <person name="El Warry N."/>
            <person name="Burke R.D."/>
            <person name="Czjzek M."/>
            <person name="Paton J.C."/>
            <person name="Vocadlo D.J."/>
            <person name="Boraston A.B."/>
        </authorList>
    </citation>
    <scope>X-RAY CRYSTALLOGRAPHY (1.85 ANGSTROMS) OF 437-1150 AND IN COMPLEXES WITH CALCIUM; MALTOTETRAOSE AND INHIBITOR</scope>
    <scope>FUNCTION</scope>
    <scope>CATALYTIC ACTIVITY</scope>
    <scope>ACTIVITY REGULATION</scope>
    <scope>BIOPHYSICOCHEMICAL PROPERTIES</scope>
    <scope>SUBCELLULAR LOCATION</scope>
    <scope>DOMAIN</scope>
    <scope>ACTIVE SITES</scope>
    <scope>MUTAGENESIS OF 1-MET--TYR-445; ASP-778 AND GLU-807</scope>
</reference>
<comment type="function">
    <text evidence="1 6 7 8">Virulence factor (By similarity). Involved in the degradation of glycogen of the mammalian host cells (PubMed:21565699). Hydrolyzes the alpha-1,6-branchpoints of glycogen (PubMed:20497336, PubMed:21565699). Hydrolyzes pullulan. Does not hydrolyze dextran (PubMed:20497336). Binds to mouse lung alveolar type II cells that are rich in glycogen stores. Is an alpha-glucan-specific carbohydrate-binding protein, which binds to amylose (pure alpha-(1,4)-linked glucose), amylopectin (alpha-(1,4)-linked glucose with alpha-(1,6) branch points), pullulan (linear polymer of mixed alpha-(1,4)- and alpha-(1,6)-linked glucose) and glycogen (similar to amylopectin with more frequent alpha-(1,6) branch points) in vitro. Does not bind to dextran (a linear polymer of alpha-(1,6)-linked glucose) (PubMed:17187076).</text>
</comment>
<comment type="catalytic activity">
    <reaction evidence="7 8">
        <text>Hydrolysis of (1-&gt;6)-alpha-D-glucosidic linkages in pullulan, amylopectin and glycogen, and in the alpha- and beta-limit dextrins of amylopectin and glycogen.</text>
        <dbReference type="EC" id="3.2.1.41"/>
    </reaction>
</comment>
<comment type="activity regulation">
    <text evidence="8">Inhibited by 4-O-alpha-D-glucopyranosylmoranoline (G1M).</text>
</comment>
<comment type="biophysicochemical properties">
    <kinetics>
        <KM evidence="8">360 uM for para-nitrophenyl-alpha-D-maltopentaoside (pNP-M5) (at 25 degrees Celsius)</KM>
        <text evidence="8">kcat is 270 min(-1) for pNP-M5.</text>
    </kinetics>
</comment>
<comment type="subcellular location">
    <subcellularLocation>
        <location evidence="4">Secreted</location>
        <location evidence="4">Cell wall</location>
        <topology evidence="4">Peptidoglycan-anchor</topology>
    </subcellularLocation>
    <subcellularLocation>
        <location evidence="2">Cell surface</location>
    </subcellularLocation>
    <text evidence="6 8">Localizes to cytoplasm in the lung alveolar type II cells of the mouse and human hosts.</text>
</comment>
<comment type="domain">
    <text evidence="6 8">The N-terminal tandem family 41 carbohydrate-binding modules (CBM) are involved in carbohydrate binding (PubMed:17187076, PubMed:21565699). The C-terminal glycosyl hydrolase 13 (GH13) domain is involved in catalysis (PubMed:21565699).</text>
</comment>
<comment type="disruption phenotype">
    <text evidence="7">Grows readily on glucose and maltotriose, but not on glycogen. No soluble alpha-glucooligosaccharides detected in the culture supernatant.</text>
</comment>
<comment type="biotechnology">
    <text evidence="11">This protein may have potential in the disruption of glycogen adherence of the pneumococci to the host cell or disruption of glycogen breakdown in the host cells by the bacteria and thus could be useful in treating streptococcal lung infections.</text>
</comment>
<comment type="similarity">
    <text evidence="10">Belongs to the glycosyl hydrolase 13 family.</text>
</comment>
<protein>
    <recommendedName>
        <fullName evidence="9">Pullulanase A</fullName>
        <ecNumber evidence="7 8">3.2.1.41</ecNumber>
    </recommendedName>
    <alternativeName>
        <fullName evidence="10">Alpha-dextrin endo-1,6-alpha-glucosidase</fullName>
    </alternativeName>
    <alternativeName>
        <fullName evidence="10">Pullulan 6-glucanohydrolase</fullName>
    </alternativeName>
</protein>
<feature type="signal peptide" evidence="3">
    <location>
        <begin position="1"/>
        <end position="44"/>
    </location>
</feature>
<feature type="chain" id="PRO_5002599297" description="Pullulanase A" evidence="3">
    <location>
        <begin position="45"/>
        <end position="1280"/>
    </location>
</feature>
<feature type="propeptide" id="PRO_5018350525" description="Removed by sortase" evidence="4">
    <location>
        <begin position="1250"/>
        <end position="1280"/>
    </location>
</feature>
<feature type="region of interest" description="Disordered" evidence="5">
    <location>
        <begin position="42"/>
        <end position="132"/>
    </location>
</feature>
<feature type="region of interest" description="Disordered" evidence="5">
    <location>
        <begin position="1140"/>
        <end position="1248"/>
    </location>
</feature>
<feature type="short sequence motif" description="LPXTG sorting signal" evidence="4">
    <location>
        <begin position="1246"/>
        <end position="1250"/>
    </location>
</feature>
<feature type="compositionally biased region" description="Low complexity" evidence="5">
    <location>
        <begin position="48"/>
        <end position="61"/>
    </location>
</feature>
<feature type="compositionally biased region" description="Polar residues" evidence="5">
    <location>
        <begin position="79"/>
        <end position="90"/>
    </location>
</feature>
<feature type="compositionally biased region" description="Low complexity" evidence="5">
    <location>
        <begin position="115"/>
        <end position="126"/>
    </location>
</feature>
<feature type="compositionally biased region" description="Basic and acidic residues" evidence="5">
    <location>
        <begin position="1149"/>
        <end position="1196"/>
    </location>
</feature>
<feature type="compositionally biased region" description="Low complexity" evidence="5">
    <location>
        <begin position="1205"/>
        <end position="1218"/>
    </location>
</feature>
<feature type="active site" description="Nucleophile" evidence="8">
    <location>
        <position position="778"/>
    </location>
</feature>
<feature type="active site" description="Proton donor" evidence="8">
    <location>
        <position position="807"/>
    </location>
</feature>
<feature type="binding site" evidence="6 8 16 18">
    <location>
        <begin position="156"/>
        <end position="158"/>
    </location>
    <ligand>
        <name>substrate</name>
    </ligand>
</feature>
<feature type="binding site" evidence="6 8 16 18">
    <location>
        <position position="168"/>
    </location>
    <ligand>
        <name>substrate</name>
    </ligand>
</feature>
<feature type="binding site" evidence="6 8 16 18">
    <location>
        <position position="214"/>
    </location>
    <ligand>
        <name>substrate</name>
    </ligand>
</feature>
<feature type="binding site" evidence="6 8 16 18">
    <location>
        <begin position="263"/>
        <end position="265"/>
    </location>
    <ligand>
        <name>substrate</name>
    </ligand>
</feature>
<feature type="binding site" evidence="6 8 16 18">
    <location>
        <position position="276"/>
    </location>
    <ligand>
        <name>substrate</name>
    </ligand>
</feature>
<feature type="binding site" evidence="6 8 16 18">
    <location>
        <position position="318"/>
    </location>
    <ligand>
        <name>substrate</name>
    </ligand>
</feature>
<feature type="binding site" evidence="6 8 16 18">
    <location>
        <position position="323"/>
    </location>
    <ligand>
        <name>substrate</name>
    </ligand>
</feature>
<feature type="binding site" evidence="8 17">
    <location>
        <position position="661"/>
    </location>
    <ligand>
        <name>Ca(2+)</name>
        <dbReference type="ChEBI" id="CHEBI:29108"/>
        <label>1</label>
    </ligand>
</feature>
<feature type="binding site" evidence="8 17">
    <location>
        <position position="663"/>
    </location>
    <ligand>
        <name>Ca(2+)</name>
        <dbReference type="ChEBI" id="CHEBI:29108"/>
        <label>1</label>
    </ligand>
</feature>
<feature type="binding site" evidence="8 18">
    <location>
        <begin position="667"/>
        <end position="668"/>
    </location>
    <ligand>
        <name>substrate</name>
    </ligand>
</feature>
<feature type="binding site" evidence="8 18">
    <location>
        <position position="743"/>
    </location>
    <ligand>
        <name>substrate</name>
    </ligand>
</feature>
<feature type="binding site" evidence="8 18">
    <location>
        <position position="809"/>
    </location>
    <ligand>
        <name>substrate</name>
    </ligand>
</feature>
<feature type="binding site" evidence="8 19">
    <location>
        <position position="828"/>
    </location>
    <ligand>
        <name>Ca(2+)</name>
        <dbReference type="ChEBI" id="CHEBI:29108"/>
        <label>2</label>
    </ligand>
</feature>
<feature type="binding site" evidence="8 19">
    <location>
        <position position="831"/>
    </location>
    <ligand>
        <name>Ca(2+)</name>
        <dbReference type="ChEBI" id="CHEBI:29108"/>
        <label>2</label>
    </ligand>
</feature>
<feature type="binding site" evidence="8 19">
    <location>
        <position position="832"/>
    </location>
    <ligand>
        <name>Ca(2+)</name>
        <dbReference type="ChEBI" id="CHEBI:29108"/>
        <label>2</label>
    </ligand>
</feature>
<feature type="binding site" evidence="8 18">
    <location>
        <position position="839"/>
    </location>
    <ligand>
        <name>substrate</name>
    </ligand>
</feature>
<feature type="binding site" evidence="8 18">
    <location>
        <position position="842"/>
    </location>
    <ligand>
        <name>substrate</name>
    </ligand>
</feature>
<feature type="binding site" evidence="8 18">
    <location>
        <position position="849"/>
    </location>
    <ligand>
        <name>substrate</name>
    </ligand>
</feature>
<feature type="binding site" evidence="8 19">
    <location>
        <position position="882"/>
    </location>
    <ligand>
        <name>Ca(2+)</name>
        <dbReference type="ChEBI" id="CHEBI:29108"/>
        <label>2</label>
    </ligand>
</feature>
<feature type="binding site" evidence="8 19">
    <location>
        <position position="886"/>
    </location>
    <ligand>
        <name>Ca(2+)</name>
        <dbReference type="ChEBI" id="CHEBI:29108"/>
        <label>2</label>
    </ligand>
</feature>
<feature type="binding site" evidence="8 18">
    <location>
        <position position="896"/>
    </location>
    <ligand>
        <name>substrate</name>
    </ligand>
</feature>
<feature type="binding site" evidence="8 18">
    <location>
        <position position="969"/>
    </location>
    <ligand>
        <name>substrate</name>
    </ligand>
</feature>
<feature type="binding site" evidence="8 18 19">
    <location>
        <begin position="989"/>
        <end position="991"/>
    </location>
    <ligand>
        <name>substrate</name>
    </ligand>
</feature>
<feature type="binding site" evidence="8 17">
    <location>
        <position position="992"/>
    </location>
    <ligand>
        <name>Ca(2+)</name>
        <dbReference type="ChEBI" id="CHEBI:29108"/>
        <label>1</label>
    </ligand>
</feature>
<feature type="site" description="Transition state stabilizer" evidence="13">
    <location>
        <position position="895"/>
    </location>
</feature>
<feature type="modified residue" description="Pentaglycyl murein peptidoglycan amidated threonine" evidence="4">
    <location>
        <position position="1249"/>
    </location>
</feature>
<feature type="mutagenesis site" description="Catalyzes the hydrolysis of a glycosidic bond, but is roughly half as effective as wild-type at releasing maltotriose (M3) to maltooctaose (M8) oligosaccharides from glycogen. Has 6-fold increase in KM for the para-nitrophenyl-alpha-D-maltopentaoside (pNP-M5) substrate and 5 to 8-fold decrease in binding affinity to a synthetic alpha-glucanase inhibitor." evidence="8">
    <location>
        <begin position="1"/>
        <end position="445"/>
    </location>
</feature>
<feature type="mutagenesis site" description="Loss of catalytic activity. Does not degrade glycogen." evidence="8">
    <original>D</original>
    <variation>A</variation>
    <location>
        <position position="778"/>
    </location>
</feature>
<feature type="mutagenesis site" description="Loss of catalytic activity. Does not degrade glycogen." evidence="8">
    <original>E</original>
    <variation>A</variation>
    <location>
        <position position="807"/>
    </location>
</feature>
<feature type="strand" evidence="20">
    <location>
        <begin position="137"/>
        <end position="144"/>
    </location>
</feature>
<feature type="strand" evidence="20">
    <location>
        <begin position="146"/>
        <end position="148"/>
    </location>
</feature>
<feature type="helix" evidence="20">
    <location>
        <begin position="150"/>
        <end position="152"/>
    </location>
</feature>
<feature type="strand" evidence="20">
    <location>
        <begin position="153"/>
        <end position="163"/>
    </location>
</feature>
<feature type="turn" evidence="20">
    <location>
        <begin position="168"/>
        <end position="171"/>
    </location>
</feature>
<feature type="strand" evidence="20">
    <location>
        <begin position="172"/>
        <end position="174"/>
    </location>
</feature>
<feature type="helix" evidence="20">
    <location>
        <begin position="175"/>
        <end position="177"/>
    </location>
</feature>
<feature type="strand" evidence="20">
    <location>
        <begin position="182"/>
        <end position="191"/>
    </location>
</feature>
<feature type="strand" evidence="20">
    <location>
        <begin position="198"/>
        <end position="207"/>
    </location>
</feature>
<feature type="strand" evidence="22">
    <location>
        <begin position="210"/>
        <end position="212"/>
    </location>
</feature>
<feature type="strand" evidence="20">
    <location>
        <begin position="215"/>
        <end position="218"/>
    </location>
</feature>
<feature type="strand" evidence="20">
    <location>
        <begin position="226"/>
        <end position="229"/>
    </location>
</feature>
<feature type="strand" evidence="20">
    <location>
        <begin position="235"/>
        <end position="238"/>
    </location>
</feature>
<feature type="strand" evidence="20">
    <location>
        <begin position="243"/>
        <end position="251"/>
    </location>
</feature>
<feature type="strand" evidence="20">
    <location>
        <begin position="253"/>
        <end position="255"/>
    </location>
</feature>
<feature type="strand" evidence="20">
    <location>
        <begin position="260"/>
        <end position="267"/>
    </location>
</feature>
<feature type="strand" evidence="20">
    <location>
        <begin position="284"/>
        <end position="286"/>
    </location>
</feature>
<feature type="strand" evidence="20">
    <location>
        <begin position="289"/>
        <end position="295"/>
    </location>
</feature>
<feature type="strand" evidence="20">
    <location>
        <begin position="303"/>
        <end position="309"/>
    </location>
</feature>
<feature type="helix" evidence="22">
    <location>
        <begin position="314"/>
        <end position="317"/>
    </location>
</feature>
<feature type="strand" evidence="20">
    <location>
        <begin position="319"/>
        <end position="322"/>
    </location>
</feature>
<feature type="strand" evidence="20">
    <location>
        <begin position="324"/>
        <end position="326"/>
    </location>
</feature>
<feature type="strand" evidence="20">
    <location>
        <begin position="329"/>
        <end position="331"/>
    </location>
</feature>
<feature type="strand" evidence="20">
    <location>
        <begin position="333"/>
        <end position="338"/>
    </location>
</feature>
<feature type="strand" evidence="20">
    <location>
        <begin position="345"/>
        <end position="347"/>
    </location>
</feature>
<feature type="strand" evidence="22">
    <location>
        <begin position="356"/>
        <end position="359"/>
    </location>
</feature>
<feature type="strand" evidence="22">
    <location>
        <begin position="369"/>
        <end position="372"/>
    </location>
</feature>
<feature type="turn" evidence="22">
    <location>
        <begin position="383"/>
        <end position="385"/>
    </location>
</feature>
<feature type="strand" evidence="22">
    <location>
        <begin position="386"/>
        <end position="389"/>
    </location>
</feature>
<feature type="turn" evidence="22">
    <location>
        <begin position="405"/>
        <end position="408"/>
    </location>
</feature>
<feature type="strand" evidence="22">
    <location>
        <begin position="424"/>
        <end position="427"/>
    </location>
</feature>
<feature type="strand" evidence="22">
    <location>
        <begin position="430"/>
        <end position="433"/>
    </location>
</feature>
<feature type="helix" evidence="21">
    <location>
        <begin position="438"/>
        <end position="445"/>
    </location>
</feature>
<feature type="strand" evidence="21">
    <location>
        <begin position="452"/>
        <end position="456"/>
    </location>
</feature>
<feature type="turn" evidence="21">
    <location>
        <begin position="457"/>
        <end position="460"/>
    </location>
</feature>
<feature type="strand" evidence="21">
    <location>
        <begin position="461"/>
        <end position="467"/>
    </location>
</feature>
<feature type="strand" evidence="21">
    <location>
        <begin position="472"/>
        <end position="479"/>
    </location>
</feature>
<feature type="strand" evidence="21">
    <location>
        <begin position="486"/>
        <end position="492"/>
    </location>
</feature>
<feature type="helix" evidence="21">
    <location>
        <begin position="497"/>
        <end position="499"/>
    </location>
</feature>
<feature type="strand" evidence="21">
    <location>
        <begin position="500"/>
        <end position="505"/>
    </location>
</feature>
<feature type="strand" evidence="21">
    <location>
        <begin position="510"/>
        <end position="512"/>
    </location>
</feature>
<feature type="strand" evidence="21">
    <location>
        <begin position="520"/>
        <end position="527"/>
    </location>
</feature>
<feature type="strand" evidence="21">
    <location>
        <begin position="530"/>
        <end position="534"/>
    </location>
</feature>
<feature type="strand" evidence="21">
    <location>
        <begin position="540"/>
        <end position="542"/>
    </location>
</feature>
<feature type="helix" evidence="21">
    <location>
        <begin position="547"/>
        <end position="549"/>
    </location>
</feature>
<feature type="helix" evidence="21">
    <location>
        <begin position="554"/>
        <end position="556"/>
    </location>
</feature>
<feature type="helix" evidence="21">
    <location>
        <begin position="566"/>
        <end position="568"/>
    </location>
</feature>
<feature type="helix" evidence="21">
    <location>
        <begin position="585"/>
        <end position="587"/>
    </location>
</feature>
<feature type="strand" evidence="21">
    <location>
        <begin position="590"/>
        <end position="593"/>
    </location>
</feature>
<feature type="helix" evidence="21">
    <location>
        <begin position="595"/>
        <end position="599"/>
    </location>
</feature>
<feature type="helix" evidence="21">
    <location>
        <begin position="602"/>
        <end position="604"/>
    </location>
</feature>
<feature type="turn" evidence="21">
    <location>
        <begin position="605"/>
        <end position="607"/>
    </location>
</feature>
<feature type="helix" evidence="21">
    <location>
        <begin position="615"/>
        <end position="619"/>
    </location>
</feature>
<feature type="helix" evidence="21">
    <location>
        <begin position="622"/>
        <end position="628"/>
    </location>
</feature>
<feature type="strand" evidence="21">
    <location>
        <begin position="631"/>
        <end position="636"/>
    </location>
</feature>
<feature type="strand" evidence="21">
    <location>
        <begin position="641"/>
        <end position="643"/>
    </location>
</feature>
<feature type="helix" evidence="21">
    <location>
        <begin position="646"/>
        <end position="648"/>
    </location>
</feature>
<feature type="strand" evidence="21">
    <location>
        <begin position="658"/>
        <end position="660"/>
    </location>
</feature>
<feature type="strand" evidence="21">
    <location>
        <begin position="668"/>
        <end position="670"/>
    </location>
</feature>
<feature type="strand" evidence="21">
    <location>
        <begin position="672"/>
        <end position="675"/>
    </location>
</feature>
<feature type="helix" evidence="21">
    <location>
        <begin position="688"/>
        <end position="702"/>
    </location>
</feature>
<feature type="strand" evidence="21">
    <location>
        <begin position="706"/>
        <end position="711"/>
    </location>
</feature>
<feature type="helix" evidence="21">
    <location>
        <begin position="720"/>
        <end position="723"/>
    </location>
</feature>
<feature type="turn" evidence="21">
    <location>
        <begin position="727"/>
        <end position="729"/>
    </location>
</feature>
<feature type="strand" evidence="21">
    <location>
        <begin position="745"/>
        <end position="748"/>
    </location>
</feature>
<feature type="helix" evidence="21">
    <location>
        <begin position="753"/>
        <end position="770"/>
    </location>
</feature>
<feature type="strand" evidence="21">
    <location>
        <begin position="774"/>
        <end position="777"/>
    </location>
</feature>
<feature type="helix" evidence="21">
    <location>
        <begin position="780"/>
        <end position="782"/>
    </location>
</feature>
<feature type="helix" evidence="21">
    <location>
        <begin position="785"/>
        <end position="798"/>
    </location>
</feature>
<feature type="strand" evidence="21">
    <location>
        <begin position="803"/>
        <end position="806"/>
    </location>
</feature>
<feature type="strand" evidence="21">
    <location>
        <begin position="822"/>
        <end position="824"/>
    </location>
</feature>
<feature type="helix" evidence="21">
    <location>
        <begin position="825"/>
        <end position="830"/>
    </location>
</feature>
<feature type="strand" evidence="21">
    <location>
        <begin position="832"/>
        <end position="837"/>
    </location>
</feature>
<feature type="helix" evidence="21">
    <location>
        <begin position="839"/>
        <end position="846"/>
    </location>
</feature>
<feature type="strand" evidence="21">
    <location>
        <begin position="849"/>
        <end position="851"/>
    </location>
</feature>
<feature type="turn" evidence="21">
    <location>
        <begin position="857"/>
        <end position="860"/>
    </location>
</feature>
<feature type="helix" evidence="21">
    <location>
        <begin position="865"/>
        <end position="872"/>
    </location>
</feature>
<feature type="strand" evidence="22">
    <location>
        <begin position="877"/>
        <end position="879"/>
    </location>
</feature>
<feature type="helix" evidence="21">
    <location>
        <begin position="884"/>
        <end position="886"/>
    </location>
</feature>
<feature type="strand" evidence="21">
    <location>
        <begin position="887"/>
        <end position="889"/>
    </location>
</feature>
<feature type="strand" evidence="21">
    <location>
        <begin position="894"/>
        <end position="897"/>
    </location>
</feature>
<feature type="helix" evidence="21">
    <location>
        <begin position="899"/>
        <end position="907"/>
    </location>
</feature>
<feature type="helix" evidence="21">
    <location>
        <begin position="914"/>
        <end position="933"/>
    </location>
</feature>
<feature type="strand" evidence="21">
    <location>
        <begin position="934"/>
        <end position="941"/>
    </location>
</feature>
<feature type="turn" evidence="21">
    <location>
        <begin position="942"/>
        <end position="947"/>
    </location>
</feature>
<feature type="helix" evidence="21">
    <location>
        <begin position="955"/>
        <end position="957"/>
    </location>
</feature>
<feature type="helix" evidence="21">
    <location>
        <begin position="963"/>
        <end position="965"/>
    </location>
</feature>
<feature type="strand" evidence="21">
    <location>
        <begin position="970"/>
        <end position="974"/>
    </location>
</feature>
<feature type="strand" evidence="21">
    <location>
        <begin position="980"/>
        <end position="988"/>
    </location>
</feature>
<feature type="helix" evidence="21">
    <location>
        <begin position="995"/>
        <end position="998"/>
    </location>
</feature>
<feature type="helix" evidence="21">
    <location>
        <begin position="1002"/>
        <end position="1006"/>
    </location>
</feature>
<feature type="turn" evidence="21">
    <location>
        <begin position="1008"/>
        <end position="1010"/>
    </location>
</feature>
<feature type="helix" evidence="21">
    <location>
        <begin position="1012"/>
        <end position="1029"/>
    </location>
</feature>
<feature type="helix" evidence="21">
    <location>
        <begin position="1032"/>
        <end position="1035"/>
    </location>
</feature>
<feature type="helix" evidence="21">
    <location>
        <begin position="1039"/>
        <end position="1045"/>
    </location>
</feature>
<feature type="strand" evidence="21">
    <location>
        <begin position="1046"/>
        <end position="1050"/>
    </location>
</feature>
<feature type="strand" evidence="21">
    <location>
        <begin position="1059"/>
        <end position="1069"/>
    </location>
</feature>
<feature type="strand" evidence="21">
    <location>
        <begin position="1075"/>
        <end position="1081"/>
    </location>
</feature>
<feature type="strand" evidence="21">
    <location>
        <begin position="1083"/>
        <end position="1085"/>
    </location>
</feature>
<feature type="strand" evidence="21">
    <location>
        <begin position="1087"/>
        <end position="1090"/>
    </location>
</feature>
<feature type="turn" evidence="21">
    <location>
        <begin position="1092"/>
        <end position="1095"/>
    </location>
</feature>
<feature type="helix" evidence="21">
    <location>
        <begin position="1096"/>
        <end position="1100"/>
    </location>
</feature>
<feature type="strand" evidence="21">
    <location>
        <begin position="1102"/>
        <end position="1105"/>
    </location>
</feature>
<feature type="strand" evidence="21">
    <location>
        <begin position="1119"/>
        <end position="1123"/>
    </location>
</feature>
<feature type="strand" evidence="21">
    <location>
        <begin position="1125"/>
        <end position="1130"/>
    </location>
</feature>
<feature type="strand" evidence="21">
    <location>
        <begin position="1134"/>
        <end position="1140"/>
    </location>
</feature>
<feature type="helix" evidence="21">
    <location>
        <begin position="1142"/>
        <end position="1144"/>
    </location>
</feature>
<organism evidence="14">
    <name type="scientific">Streptococcus pneumoniae serotype 4 (strain ATCC BAA-334 / TIGR4)</name>
    <dbReference type="NCBI Taxonomy" id="170187"/>
    <lineage>
        <taxon>Bacteria</taxon>
        <taxon>Bacillati</taxon>
        <taxon>Bacillota</taxon>
        <taxon>Bacilli</taxon>
        <taxon>Lactobacillales</taxon>
        <taxon>Streptococcaceae</taxon>
        <taxon>Streptococcus</taxon>
    </lineage>
</organism>
<keyword id="KW-0002">3D-structure</keyword>
<keyword id="KW-0106">Calcium</keyword>
<keyword id="KW-0134">Cell wall</keyword>
<keyword id="KW-0326">Glycosidase</keyword>
<keyword id="KW-0378">Hydrolase</keyword>
<keyword id="KW-0479">Metal-binding</keyword>
<keyword id="KW-0572">Peptidoglycan-anchor</keyword>
<keyword id="KW-1185">Reference proteome</keyword>
<keyword id="KW-0964">Secreted</keyword>
<keyword id="KW-0732">Signal</keyword>
<keyword id="KW-0843">Virulence</keyword>
<proteinExistence type="evidence at protein level"/>
<evidence type="ECO:0000250" key="1">
    <source>
        <dbReference type="UniProtKB" id="A0A0H2ZL64"/>
    </source>
</evidence>
<evidence type="ECO:0000250" key="2">
    <source>
        <dbReference type="UniProtKB" id="Q9F930"/>
    </source>
</evidence>
<evidence type="ECO:0000255" key="3"/>
<evidence type="ECO:0000255" key="4">
    <source>
        <dbReference type="PROSITE-ProRule" id="PRU00477"/>
    </source>
</evidence>
<evidence type="ECO:0000256" key="5">
    <source>
        <dbReference type="SAM" id="MobiDB-lite"/>
    </source>
</evidence>
<evidence type="ECO:0000269" key="6">
    <source>
    </source>
</evidence>
<evidence type="ECO:0000269" key="7">
    <source>
    </source>
</evidence>
<evidence type="ECO:0000269" key="8">
    <source>
    </source>
</evidence>
<evidence type="ECO:0000303" key="9">
    <source>
    </source>
</evidence>
<evidence type="ECO:0000305" key="10"/>
<evidence type="ECO:0000305" key="11">
    <source>
    </source>
</evidence>
<evidence type="ECO:0000305" key="12">
    <source>
    </source>
</evidence>
<evidence type="ECO:0000305" key="13">
    <source>
    </source>
</evidence>
<evidence type="ECO:0000312" key="14">
    <source>
        <dbReference type="EMBL" id="AAK74446.1"/>
    </source>
</evidence>
<evidence type="ECO:0000312" key="15">
    <source>
        <dbReference type="Proteomes" id="UP000000585"/>
    </source>
</evidence>
<evidence type="ECO:0007744" key="16">
    <source>
        <dbReference type="PDB" id="2J44"/>
    </source>
</evidence>
<evidence type="ECO:0007744" key="17">
    <source>
        <dbReference type="PDB" id="2YA0"/>
    </source>
</evidence>
<evidence type="ECO:0007744" key="18">
    <source>
        <dbReference type="PDB" id="2YA1"/>
    </source>
</evidence>
<evidence type="ECO:0007744" key="19">
    <source>
        <dbReference type="PDB" id="2YA2"/>
    </source>
</evidence>
<evidence type="ECO:0007829" key="20">
    <source>
        <dbReference type="PDB" id="2J44"/>
    </source>
</evidence>
<evidence type="ECO:0007829" key="21">
    <source>
        <dbReference type="PDB" id="2YA0"/>
    </source>
</evidence>
<evidence type="ECO:0007829" key="22">
    <source>
        <dbReference type="PDB" id="2YA1"/>
    </source>
</evidence>
<accession>A0A0H2UNG0</accession>
<name>PULA_STRPN</name>
<sequence>MRKTPSHTEKKMVYSIRSLKNGTGSVLIGASLVLLAMATPTISSDESTPTTNEPNNRNTTTLAQPLTDTAAGSGKNESDISSPGNANASLEKTEEKPAASPADPAPQTGQDRSSEPTTSTSPVTTETKAEEPIEDNYFRIHVKKLPEENKDAQGLWTWDDVEKPSENWPNGALSFKDAKKDDYGYYLDVKLKGEQAKKISFLINNTAGKNLTGDKSVEKLVPKMNEAWLDQDYKVFSYEPQPAGTVRVNYYRTDGNYDKKSLWYWGDVKNPSSAQWPDGTDFTATGKYGRYIDIPLNEAAREFGFLLLDESKQGDDVKIRKENYKFTDLKNHSQIFLKDDDESIYTNPYYVHDIRMTGAQHVGTSSIESSFSTLVGAKKEDILKHSNITNHLGNKVTITDVAIDEAGKKVTYSGDFSDTKHPYTVSYNSDQFTTKTSWRLKDETYSYDGKLGADLKEEGKQVDLTLWSPSADKVSVVVYDKNDPDKVVGTVALEKGERGTWKQTLDSTNKLGITDFTGYYYQYQIERQGKTVLALDPYAKSLAAWNSDDSKIDDAHKVAKAAFVDPAKLGPQDLTYGKIHNFKTREDAVIYEAHVRDFTSDPAIAKDLTKPFGTFEAFIEKLDYLKDLGVTHIQLLPVLSYYFVNELKNHERLSDYASSNSNYNWGYDPQNYFSLTGMYSSDPKNPEKRIAEFKNLINEIHKRGMGAILDVVYNHTAKVDLFEDLEPNYYHFMDADGTPRTSFGGGRLGTTHHMTKRLLIDSIKYLVDTYKVDGFRFDMMGDHDAASIEEAYKAARALNPNLIMLGEGWRTYAGDENMPTKAADQDWMKHTDTVAVFSDDIRNNLKSGYPNEGQPAFITGGKRDVNTIFKNLIAQPTNFEADSPGDVIQYIAAHDNLTLFDIIAQSIKKDPSKAENYAEIHRRLRLGNLMVLTAQGTPFIHSGQEYGRTKQFRDPAYKTPVAEDKVPNKSHLLRDKDGNPFDYPYFIHDSYDSSDAVNKFDWTKATDGKAYPENVKSRDYMKGLIALRQSTDAFRLKSLQDIKDRVHLITVPGQNGVEKEDVVIGYQITAPNGDIYAVFVNADEKAREFNLGTAFAHLRNAEVLADENQAGPVGIANPKGLEWTEKGLKLNALTATVLRVSQNGTSHESTAEEKPDSTPSKPEHQNEASHPAHQDPAPEARPDSTKPDAKVADAENKPSQATADSQAEQPAQEAQASSVKEAVRNESVENSSKENIPATPDKQAELPNTGIKNENKLLFAGISLLALLGLGFLLKNKKEN</sequence>
<gene>
    <name evidence="11 12 13" type="primary">spuA</name>
    <name evidence="14" type="ordered locus">SP_0268</name>
</gene>